<organism>
    <name type="scientific">Human cytomegalovirus (strain AD169)</name>
    <name type="common">HHV-5</name>
    <name type="synonym">Human herpesvirus 5</name>
    <dbReference type="NCBI Taxonomy" id="10360"/>
    <lineage>
        <taxon>Viruses</taxon>
        <taxon>Duplodnaviria</taxon>
        <taxon>Heunggongvirae</taxon>
        <taxon>Peploviricota</taxon>
        <taxon>Herviviricetes</taxon>
        <taxon>Herpesvirales</taxon>
        <taxon>Orthoherpesviridae</taxon>
        <taxon>Betaherpesvirinae</taxon>
        <taxon>Cytomegalovirus</taxon>
        <taxon>Cytomegalovirus humanbeta5</taxon>
        <taxon>Human cytomegalovirus</taxon>
    </lineage>
</organism>
<gene>
    <name type="primary">UL97</name>
</gene>
<keyword id="KW-0067">ATP-binding</keyword>
<keyword id="KW-0945">Host-virus interaction</keyword>
<keyword id="KW-0418">Kinase</keyword>
<keyword id="KW-1121">Modulation of host cell cycle by virus</keyword>
<keyword id="KW-0547">Nucleotide-binding</keyword>
<keyword id="KW-1185">Reference proteome</keyword>
<keyword id="KW-0808">Transferase</keyword>
<keyword id="KW-0946">Virion</keyword>
<reference key="1">
    <citation type="journal article" date="1990" name="Curr. Top. Microbiol. Immunol.">
        <title>Analysis of the protein-coding content of the sequence of human cytomegalovirus strain AD169.</title>
        <authorList>
            <person name="Chee M.S."/>
            <person name="Bankier A.T."/>
            <person name="Beck S."/>
            <person name="Bohni R."/>
            <person name="Brown C.M."/>
            <person name="Cerny R."/>
            <person name="Horsnell T."/>
            <person name="Hutchison C.A. III"/>
            <person name="Kouzarides T."/>
            <person name="Martignetti J.A."/>
            <person name="Preddie E."/>
            <person name="Satchwell S.C."/>
            <person name="Tomlinson P."/>
            <person name="Weston K.M."/>
            <person name="Barrell B.G."/>
        </authorList>
    </citation>
    <scope>NUCLEOTIDE SEQUENCE [LARGE SCALE GENOMIC DNA]</scope>
</reference>
<reference key="2">
    <citation type="journal article" date="2001" name="Antimicrob. Agents Chemother.">
        <title>Sequencing of cytomegalovirus UL97 gene for genotypic antiviral resistance testing.</title>
        <authorList>
            <person name="Lurain N.S."/>
            <person name="Weinberg A."/>
            <person name="Crumpacker C.S."/>
            <person name="Chou S."/>
        </authorList>
    </citation>
    <scope>NUCLEOTIDE SEQUENCE [GENOMIC DNA]</scope>
    <scope>VARIANTS GCV RESISTANT ILE-460; VAL-460; GLN-520; GLY-592; VAL-594; PRO-594; SER-595; TRP-595; TRP-603 AND TYR-607</scope>
    <source>
        <strain>Isolate clinical C005</strain>
        <strain>Isolate clinical C076</strain>
        <strain>Isolate clinical C325</strain>
        <strain>Isolate clinical C327</strain>
        <strain>Isolate clinical C336</strain>
        <strain>Isolate clinical CL-1A</strain>
        <strain>Isolate clinical E428</strain>
        <strain>Isolate clinical E460</strain>
        <strain>Isolate clinical E540</strain>
        <strain>Isolate clinical E545</strain>
        <strain>Isolate clinical E759</strain>
        <strain>Isolate clinical E760</strain>
        <strain>Isolate clinical E761</strain>
        <strain>Isolate clinical E763</strain>
        <strain>Isolate clinical FK-2A</strain>
        <strain>Isolate clinical GR-3A</strain>
        <strain>Isolate clinical HD-4A</strain>
        <strain>Isolate clinical HL-6A</strain>
        <strain>Isolate clinical HR-7</strain>
        <strain>Isolate clinical MG-8</strain>
        <strain>Isolate clinical PB-9</strain>
        <strain>Isolate clinical SG-10</strain>
        <strain>Isolate clinical SN-11</strain>
        <strain>Isolate clinical SW-12</strain>
        <strain>Isolate clinical TH-7A</strain>
        <strain>Isolate clinical TL-8A</strain>
    </source>
</reference>
<reference key="3">
    <citation type="journal article" date="2003" name="J. Gen. Virol.">
        <title>The human cytomegalovirus genome revisited: comparison with the chimpanzee cytomegalovirus genome.</title>
        <authorList>
            <person name="Davison A.J."/>
            <person name="Dolan A."/>
            <person name="Akter P."/>
            <person name="Addison C."/>
            <person name="Dargan D.J."/>
            <person name="Alcendor D.J."/>
            <person name="McGeoch D.J."/>
            <person name="Hayward G.S."/>
        </authorList>
    </citation>
    <scope>GENOME REANNOTATION</scope>
</reference>
<reference key="4">
    <citation type="journal article" date="2003" name="J. Gen. Virol.">
        <authorList>
            <person name="Davison A.J."/>
            <person name="Dolan A."/>
            <person name="Akter P."/>
            <person name="Addison C."/>
            <person name="Dargan D.J."/>
            <person name="Alcendor D.J."/>
            <person name="McGeoch D.J."/>
            <person name="Hayward G.S."/>
        </authorList>
    </citation>
    <scope>ERRATUM OF PUBMED:12533697</scope>
</reference>
<reference key="5">
    <citation type="journal article" date="1992" name="Nature">
        <title>Human cytomegalovirus UL97 open reading frame encodes a protein that phosphorylates the antiviral nucleoside analogue ganciclovir.</title>
        <authorList>
            <person name="Littler E."/>
            <person name="Stuart A.D."/>
            <person name="Chee M.S."/>
        </authorList>
    </citation>
    <scope>FUNCTION</scope>
</reference>
<reference key="6">
    <citation type="journal article" date="1992" name="Nature">
        <title>A protein kinase homologue controls phosphorylation of ganciclovir in human cytomegalovirus-infected cells.</title>
        <authorList>
            <person name="Sullivan V."/>
            <person name="Talarico C.L."/>
            <person name="Stanat S.C."/>
            <person name="Davis M."/>
            <person name="Coen D.M."/>
            <person name="Biron K.K."/>
        </authorList>
    </citation>
    <scope>FUNCTION</scope>
</reference>
<reference key="7">
    <citation type="journal article" date="1992" name="Nature">
        <authorList>
            <person name="Sullivan V."/>
            <person name="Talarico C.L."/>
            <person name="Stanat S.C."/>
            <person name="Davis M."/>
            <person name="Coen D.M."/>
            <person name="Biron K.K."/>
        </authorList>
    </citation>
    <scope>ERRATUM OF PUBMED:1319560</scope>
</reference>
<reference key="8">
    <citation type="journal article" date="1993" name="Nature">
        <authorList>
            <person name="Sullivan V."/>
            <person name="Talarico C.L."/>
            <person name="Stanat S.C."/>
            <person name="Davis M."/>
            <person name="Coen D.M."/>
            <person name="Biron K.K."/>
        </authorList>
    </citation>
    <scope>ERRATUM OF PUBMED:1319560</scope>
</reference>
<reference key="9">
    <citation type="journal article" date="1997" name="J. Virol.">
        <title>The human cytomegalovirus UL97 protein is a protein kinase that autophosphorylates on serines and threonines.</title>
        <authorList>
            <person name="He Z."/>
            <person name="He Y.S."/>
            <person name="Kim Y."/>
            <person name="Chu L."/>
            <person name="Ohmstede C."/>
            <person name="Biron K.K."/>
            <person name="Coen D.M."/>
        </authorList>
    </citation>
    <scope>AUTOPHOSPHORYLATION</scope>
</reference>
<reference key="10">
    <citation type="journal article" date="1999" name="J. Virol.">
        <title>Cellular elongation factor 1delta is modified in cells infected with representative alpha-, beta-, or gammaherpesviruses.</title>
        <authorList>
            <person name="Kawaguchi Y."/>
            <person name="Matsumura T."/>
            <person name="Roizman B."/>
            <person name="Hirai K."/>
        </authorList>
    </citation>
    <scope>PHOSPHORYLATION OF HOST E1FD</scope>
</reference>
<reference key="11">
    <citation type="journal article" date="2002" name="J. Biol. Chem.">
        <title>Specific phosphorylation of exogenous protein and peptide substrates by the human cytomegalovirus UL97 protein kinase. Importance of the P+5 position.</title>
        <authorList>
            <person name="Baek M.C."/>
            <person name="Krosky P.M."/>
            <person name="He Z."/>
            <person name="Coen D.M."/>
        </authorList>
    </citation>
    <scope>FUNCTION IN PHOSPHORYLATION OF HOST H2B</scope>
</reference>
<reference key="12">
    <citation type="journal article" date="2003" name="J. Virol.">
        <title>The human cytomegalovirus UL97 protein kinase, an antiviral drug target, is required at the stage of nuclear egress.</title>
        <authorList>
            <person name="Krosky P.M."/>
            <person name="Baek M.C."/>
            <person name="Coen D.M."/>
        </authorList>
    </citation>
    <scope>FUNCTION IN NUCLEAR EGRESS</scope>
</reference>
<reference key="13">
    <citation type="journal article" date="2003" name="J. Virol.">
        <title>The human cytomegalovirus UL44 protein is a substrate for the UL97 protein kinase.</title>
        <authorList>
            <person name="Krosky P.M."/>
            <person name="Baek M.C."/>
            <person name="Jahng W.J."/>
            <person name="Barrera I."/>
            <person name="Harvey R.J."/>
            <person name="Biron K.K."/>
            <person name="Coen D.M."/>
            <person name="Sethna P.B."/>
        </authorList>
    </citation>
    <scope>FUNCTION IN PHOSPHORYLATION OF UL44</scope>
</reference>
<reference key="14">
    <citation type="journal article" date="2004" name="J. Virol.">
        <title>Identification of proteins in human cytomegalovirus (HCMV) particles: the HCMV proteome.</title>
        <authorList>
            <person name="Varnum S.M."/>
            <person name="Streblow D.N."/>
            <person name="Monroe M.E."/>
            <person name="Smith P."/>
            <person name="Auberry K.J."/>
            <person name="Pasa-Tolic L."/>
            <person name="Wang D."/>
            <person name="Camp D.G. II"/>
            <person name="Rodland K."/>
            <person name="Wiley S."/>
            <person name="Britt W."/>
            <person name="Shenk T."/>
            <person name="Smith R.D."/>
            <person name="Nelson J.A."/>
        </authorList>
    </citation>
    <scope>IDENTIFICATION</scope>
</reference>
<reference key="15">
    <citation type="journal article" date="2004" name="J. Virol.">
        <authorList>
            <person name="Varnum S.M."/>
            <person name="Streblow D.N."/>
            <person name="Monroe M.E."/>
            <person name="Smith P."/>
            <person name="Auberry K.J."/>
            <person name="Pasa-Tolic L."/>
            <person name="Wang D."/>
            <person name="Camp D.G. II"/>
            <person name="Rodland K."/>
            <person name="Wiley S."/>
            <person name="Britt W."/>
            <person name="Shenk T."/>
            <person name="Smith R.D."/>
            <person name="Nelson J.A."/>
        </authorList>
    </citation>
    <scope>ERRATUM OF PUBMED:15452216</scope>
</reference>
<reference key="16">
    <citation type="journal article" date="2004" name="Virology">
        <title>Phosphorylation of the RNA polymerase II carboxyl-terminal domain in human cytomegalovirus-infected cells and in vitro by the viral UL97 protein kinase.</title>
        <authorList>
            <person name="Baek M.C."/>
            <person name="Krosky P.M."/>
            <person name="Pearson A."/>
            <person name="Coen D.M."/>
        </authorList>
    </citation>
    <scope>FUNCTION IN PHOSPHORYLATION OF HOST POLR2A</scope>
</reference>
<reference key="17">
    <citation type="journal article" date="2005" name="J. Virol.">
        <title>Human cytomegalovirus UL97 Kinase is required for the normal intranuclear distribution of pp65 and virion morphogenesis.</title>
        <authorList>
            <person name="Prichard M.N."/>
            <person name="Britt W.J."/>
            <person name="Daily S.L."/>
            <person name="Hartline C.B."/>
            <person name="Kern E.R."/>
        </authorList>
    </citation>
    <scope>FUNCTION</scope>
</reference>
<reference key="18">
    <citation type="journal article" date="2007" name="J. Virol.">
        <title>Human cytomegalovirus protein kinase UL97 forms a complex with the tegument phosphoprotein pp65.</title>
        <authorList>
            <person name="Kamil J.P."/>
            <person name="Coen D.M."/>
        </authorList>
    </citation>
    <scope>INTERACTION WITH UL83</scope>
</reference>
<reference key="19">
    <citation type="journal article" date="2008" name="Science">
        <title>Phosphorylation of retinoblastoma protein by viral protein with cyclin-dependent kinase function.</title>
        <authorList>
            <person name="Hume A.J."/>
            <person name="Finkel J.S."/>
            <person name="Kamil J.P."/>
            <person name="Coen D.M."/>
            <person name="Culbertson M.R."/>
            <person name="Kalejta R.F."/>
        </authorList>
    </citation>
    <scope>FUNCTION IN PHOSPHORYLATION OF HOST RB1</scope>
</reference>
<reference key="20">
    <citation type="journal article" date="2011" name="J. Virol.">
        <title>Human cytomegalovirus UL97 kinase and nonkinase functions mediate viral cytoplasmic secondary envelopment.</title>
        <authorList>
            <person name="Goldberg M.D."/>
            <person name="Honigman A."/>
            <person name="Weinstein J."/>
            <person name="Chou S."/>
            <person name="Taraboulos A."/>
            <person name="Rouvinski A."/>
            <person name="Shinder V."/>
            <person name="Wolf D.G."/>
        </authorList>
    </citation>
    <scope>FUNCTION</scope>
</reference>
<reference key="21">
    <citation type="journal article" date="2015" name="J. Virol.">
        <title>Human cytomegalovirus UL97 phosphorylates the viral nuclear egress complex.</title>
        <authorList>
            <person name="Sharma M."/>
            <person name="Bender B.J."/>
            <person name="Kamil J.P."/>
            <person name="Lye M.F."/>
            <person name="Pesola J.M."/>
            <person name="Reim N.I."/>
            <person name="Hogle J.M."/>
            <person name="Coen D.M."/>
        </authorList>
    </citation>
    <scope>FUNCTION</scope>
    <scope>CATALYTIC ACTIVITY</scope>
</reference>
<reference key="22">
    <citation type="journal article" date="2019" name="Nat. Microbiol.">
        <title>Human cytomegalovirus overcomes SAMHD1 restriction in macrophages via pUL97.</title>
        <authorList>
            <person name="Businger R."/>
            <person name="Deutschmann J."/>
            <person name="Gruska I."/>
            <person name="Milbradt J."/>
            <person name="Wiebusch L."/>
            <person name="Gramberg T."/>
            <person name="Schindler M."/>
        </authorList>
    </citation>
    <scope>FUNCTION</scope>
    <scope>CATALYTIC ACTIVITY</scope>
    <scope>AUTOPHOSPHORYLATION</scope>
</reference>
<reference key="23">
    <citation type="journal article" date="2019" name="Cell Rep.">
        <title>Conserved Herpesvirus Protein Kinases Target SAMHD1 to Facilitate Virus Replication.</title>
        <authorList>
            <person name="Zhang K."/>
            <person name="Lv D.W."/>
            <person name="Li R."/>
        </authorList>
    </citation>
    <scope>FUNCTION</scope>
    <scope>CATALYTIC ACTIVITY</scope>
</reference>
<dbReference type="EC" id="2.7.11.1" evidence="16 17 18"/>
<dbReference type="EMBL" id="X17403">
    <property type="protein sequence ID" value="CAA35333.1"/>
    <property type="molecule type" value="Genomic_DNA"/>
</dbReference>
<dbReference type="EMBL" id="AF345348">
    <property type="protein sequence ID" value="AAL10763.1"/>
    <property type="molecule type" value="Genomic_DNA"/>
</dbReference>
<dbReference type="EMBL" id="AF345349">
    <property type="protein sequence ID" value="AAL10764.1"/>
    <property type="molecule type" value="Genomic_DNA"/>
</dbReference>
<dbReference type="EMBL" id="AF345350">
    <property type="protein sequence ID" value="AAL10765.1"/>
    <property type="molecule type" value="Genomic_DNA"/>
</dbReference>
<dbReference type="EMBL" id="AF345351">
    <property type="protein sequence ID" value="AAL10766.1"/>
    <property type="molecule type" value="Genomic_DNA"/>
</dbReference>
<dbReference type="EMBL" id="AF345352">
    <property type="protein sequence ID" value="AAL10767.1"/>
    <property type="molecule type" value="Genomic_DNA"/>
</dbReference>
<dbReference type="EMBL" id="AF345353">
    <property type="protein sequence ID" value="AAL10768.1"/>
    <property type="molecule type" value="Genomic_DNA"/>
</dbReference>
<dbReference type="EMBL" id="AF345354">
    <property type="protein sequence ID" value="AAL10769.1"/>
    <property type="molecule type" value="Genomic_DNA"/>
</dbReference>
<dbReference type="EMBL" id="AF345355">
    <property type="protein sequence ID" value="AAL10770.1"/>
    <property type="molecule type" value="Genomic_DNA"/>
</dbReference>
<dbReference type="EMBL" id="AF345356">
    <property type="protein sequence ID" value="AAL10771.1"/>
    <property type="molecule type" value="Genomic_DNA"/>
</dbReference>
<dbReference type="EMBL" id="AF345357">
    <property type="protein sequence ID" value="AAL10772.1"/>
    <property type="molecule type" value="Genomic_DNA"/>
</dbReference>
<dbReference type="EMBL" id="AF345358">
    <property type="protein sequence ID" value="AAL10773.1"/>
    <property type="molecule type" value="Genomic_DNA"/>
</dbReference>
<dbReference type="EMBL" id="AF345359">
    <property type="protein sequence ID" value="AAL10774.1"/>
    <property type="molecule type" value="Genomic_DNA"/>
</dbReference>
<dbReference type="EMBL" id="AF345360">
    <property type="protein sequence ID" value="AAL10775.1"/>
    <property type="molecule type" value="Genomic_DNA"/>
</dbReference>
<dbReference type="EMBL" id="AF345361">
    <property type="protein sequence ID" value="AAL10776.1"/>
    <property type="molecule type" value="Genomic_DNA"/>
</dbReference>
<dbReference type="EMBL" id="AF345362">
    <property type="protein sequence ID" value="AAL10777.1"/>
    <property type="molecule type" value="Genomic_DNA"/>
</dbReference>
<dbReference type="EMBL" id="AF345363">
    <property type="protein sequence ID" value="AAL10778.1"/>
    <property type="molecule type" value="Genomic_DNA"/>
</dbReference>
<dbReference type="EMBL" id="AF345364">
    <property type="protein sequence ID" value="AAL10779.1"/>
    <property type="molecule type" value="Genomic_DNA"/>
</dbReference>
<dbReference type="EMBL" id="AF345365">
    <property type="protein sequence ID" value="AAL10780.1"/>
    <property type="molecule type" value="Genomic_DNA"/>
</dbReference>
<dbReference type="EMBL" id="AF345366">
    <property type="protein sequence ID" value="AAL10781.1"/>
    <property type="molecule type" value="Genomic_DNA"/>
</dbReference>
<dbReference type="EMBL" id="AF345367">
    <property type="protein sequence ID" value="AAL10782.1"/>
    <property type="molecule type" value="Genomic_DNA"/>
</dbReference>
<dbReference type="EMBL" id="AF345368">
    <property type="protein sequence ID" value="AAL10783.1"/>
    <property type="molecule type" value="Genomic_DNA"/>
</dbReference>
<dbReference type="EMBL" id="AF345369">
    <property type="protein sequence ID" value="AAL10784.1"/>
    <property type="molecule type" value="Genomic_DNA"/>
</dbReference>
<dbReference type="EMBL" id="AF345370">
    <property type="protein sequence ID" value="AAL10785.1"/>
    <property type="molecule type" value="Genomic_DNA"/>
</dbReference>
<dbReference type="EMBL" id="AF345371">
    <property type="protein sequence ID" value="AAL10786.1"/>
    <property type="molecule type" value="Genomic_DNA"/>
</dbReference>
<dbReference type="EMBL" id="AF345372">
    <property type="protein sequence ID" value="AAL10787.1"/>
    <property type="molecule type" value="Genomic_DNA"/>
</dbReference>
<dbReference type="EMBL" id="AF345373">
    <property type="protein sequence ID" value="AAL10788.1"/>
    <property type="molecule type" value="Genomic_DNA"/>
</dbReference>
<dbReference type="EMBL" id="AF425081">
    <property type="protein sequence ID" value="AAL10789.1"/>
    <property type="molecule type" value="Genomic_DNA"/>
</dbReference>
<dbReference type="EMBL" id="AF425082">
    <property type="protein sequence ID" value="AAL10790.1"/>
    <property type="molecule type" value="Genomic_DNA"/>
</dbReference>
<dbReference type="EMBL" id="BK000394">
    <property type="protein sequence ID" value="DAA00194.1"/>
    <property type="molecule type" value="Genomic_DNA"/>
</dbReference>
<dbReference type="PIR" id="S09862">
    <property type="entry name" value="QQBEJ5"/>
</dbReference>
<dbReference type="ELM" id="P16788"/>
<dbReference type="ChEMBL" id="CHEMBL1287608"/>
<dbReference type="DrugBank" id="DB06234">
    <property type="generic name" value="Maribavir"/>
</dbReference>
<dbReference type="DrugCentral" id="P16788"/>
<dbReference type="Proteomes" id="UP000008991">
    <property type="component" value="Segment"/>
</dbReference>
<dbReference type="Proteomes" id="UP000008992">
    <property type="component" value="Segment"/>
</dbReference>
<dbReference type="GO" id="GO:0044423">
    <property type="term" value="C:virion component"/>
    <property type="evidence" value="ECO:0007669"/>
    <property type="project" value="UniProtKB-KW"/>
</dbReference>
<dbReference type="GO" id="GO:0005524">
    <property type="term" value="F:ATP binding"/>
    <property type="evidence" value="ECO:0007669"/>
    <property type="project" value="UniProtKB-KW"/>
</dbReference>
<dbReference type="GO" id="GO:0106310">
    <property type="term" value="F:protein serine kinase activity"/>
    <property type="evidence" value="ECO:0007669"/>
    <property type="project" value="RHEA"/>
</dbReference>
<dbReference type="GO" id="GO:0004674">
    <property type="term" value="F:protein serine/threonine kinase activity"/>
    <property type="evidence" value="ECO:0007669"/>
    <property type="project" value="UniProtKB-EC"/>
</dbReference>
<dbReference type="GO" id="GO:0044071">
    <property type="term" value="P:symbiont-mediated perturbation of host cell cycle progression"/>
    <property type="evidence" value="ECO:0007669"/>
    <property type="project" value="UniProtKB-KW"/>
</dbReference>
<dbReference type="GO" id="GO:0016032">
    <property type="term" value="P:viral process"/>
    <property type="evidence" value="ECO:0007669"/>
    <property type="project" value="InterPro"/>
</dbReference>
<dbReference type="Gene3D" id="1.10.510.10">
    <property type="entry name" value="Transferase(Phosphotransferase) domain 1"/>
    <property type="match status" value="1"/>
</dbReference>
<dbReference type="InterPro" id="IPR010615">
    <property type="entry name" value="Herpes_UL97"/>
</dbReference>
<dbReference type="InterPro" id="IPR011009">
    <property type="entry name" value="Kinase-like_dom_sf"/>
</dbReference>
<dbReference type="InterPro" id="IPR008266">
    <property type="entry name" value="Tyr_kinase_AS"/>
</dbReference>
<dbReference type="Pfam" id="PF06734">
    <property type="entry name" value="UL97"/>
    <property type="match status" value="1"/>
</dbReference>
<dbReference type="SUPFAM" id="SSF56112">
    <property type="entry name" value="Protein kinase-like (PK-like)"/>
    <property type="match status" value="1"/>
</dbReference>
<dbReference type="PROSITE" id="PS00107">
    <property type="entry name" value="PROTEIN_KINASE_ATP"/>
    <property type="match status" value="1"/>
</dbReference>
<dbReference type="PROSITE" id="PS00109">
    <property type="entry name" value="PROTEIN_KINASE_TYR"/>
    <property type="match status" value="1"/>
</dbReference>
<name>UL97_HCMVA</name>
<protein>
    <recommendedName>
        <fullName>Serine/threonine protein kinase UL97</fullName>
        <ecNumber evidence="16 17 18">2.7.11.1</ecNumber>
    </recommendedName>
    <alternativeName>
        <fullName>Ganciclovir kinase</fullName>
    </alternativeName>
    <alternativeName>
        <fullName>HSRF3 protein</fullName>
    </alternativeName>
</protein>
<organismHost>
    <name type="scientific">Homo sapiens</name>
    <name type="common">Human</name>
    <dbReference type="NCBI Taxonomy" id="9606"/>
</organismHost>
<proteinExistence type="evidence at protein level"/>
<evidence type="ECO:0000250" key="1"/>
<evidence type="ECO:0000255" key="2">
    <source>
        <dbReference type="PROSITE-ProRule" id="PRU10028"/>
    </source>
</evidence>
<evidence type="ECO:0000256" key="3">
    <source>
        <dbReference type="SAM" id="MobiDB-lite"/>
    </source>
</evidence>
<evidence type="ECO:0000269" key="4">
    <source>
    </source>
</evidence>
<evidence type="ECO:0000269" key="5">
    <source>
    </source>
</evidence>
<evidence type="ECO:0000269" key="6">
    <source>
    </source>
</evidence>
<evidence type="ECO:0000269" key="7">
    <source>
    </source>
</evidence>
<evidence type="ECO:0000269" key="8">
    <source>
    </source>
</evidence>
<evidence type="ECO:0000269" key="9">
    <source>
    </source>
</evidence>
<evidence type="ECO:0000269" key="10">
    <source>
    </source>
</evidence>
<evidence type="ECO:0000269" key="11">
    <source>
    </source>
</evidence>
<evidence type="ECO:0000269" key="12">
    <source>
    </source>
</evidence>
<evidence type="ECO:0000269" key="13">
    <source>
    </source>
</evidence>
<evidence type="ECO:0000269" key="14">
    <source>
    </source>
</evidence>
<evidence type="ECO:0000269" key="15">
    <source>
    </source>
</evidence>
<evidence type="ECO:0000269" key="16">
    <source>
    </source>
</evidence>
<evidence type="ECO:0000269" key="17">
    <source>
    </source>
</evidence>
<evidence type="ECO:0000269" key="18">
    <source>
    </source>
</evidence>
<evidence type="ECO:0000305" key="19"/>
<sequence>MSSALRSRARSASLGTTTQGWDPPPLRRPSRARRRQWMREAAQAAAQAAVQAAQAAAAQVAQAHVDENEVVDLMADEAGGGVTTLTTLSSVSTTTVLGHATFSACVRSDVMRDGEKEDAASDKENLRRPVVPSTSSRGSAASGDGYHGLRCRETSAMWSFEYDRDGDVTSVRRALFTGGSDPSDSVSGVRGGRKRPLRPPLVSLARTPLCRRRVGGVDAVLEENDVELRAESQDSAVASGPGRIPQPLSGSSGEESATAVEADSTSHDDVHCTCSNDQIITTSIRGLTCDPRMFLRLTHPELCELSISYLLVYVPKEDDFCHKICYAVDMSDESYRLGQGSFGEVWPLDRYRVVKVARKHSETVLTVWMSGLIRTRAAGEQQQPPSLVGTGVHRGLLTATGCCLLHNVTVHRRFHTDMFHHDQWKLACIDSYRRAFCTLADAIKFLNHQCRVCHFDITPMNVLIDVNPHNPSEIVRAALCDYSLSEPYPDYNERCVAVFQETGTARRIPNCSHRLRECYHPAFRPMPLQKLLICDPHARFPVAGLRRYCMSELSALGNVLGFCLMRLLDRRGLDEVRMGTEALLFKHAGAACRALENGKLTHCSDACLLILAAQMSYGACLLGEHGAALVSHTLRFVEAKMSSCRVRAFRRFYHECSQTMLHEYVRKNVERLLATSDGLYLYNAFRRTTSIICEEDLDGDCRQLFPE</sequence>
<accession>P16788</accession>
<accession>Q7M6J4</accession>
<accession>Q910D5</accession>
<accession>Q910F8</accession>
<accession>Q910W3</accession>
<accession>Q91B46</accession>
<accession>Q91B47</accession>
<accession>Q91B48</accession>
<accession>Q91B49</accession>
<accession>Q91B50</accession>
<accession>Q91B51</accession>
<accession>Q91B52</accession>
<accession>Q91B53</accession>
<accession>Q91B54</accession>
<accession>Q91B55</accession>
<feature type="chain" id="PRO_0000088192" description="Serine/threonine protein kinase UL97">
    <location>
        <begin position="1"/>
        <end position="707"/>
    </location>
</feature>
<feature type="region of interest" description="Disordered" evidence="3">
    <location>
        <begin position="1"/>
        <end position="33"/>
    </location>
</feature>
<feature type="region of interest" description="Disordered" evidence="3">
    <location>
        <begin position="113"/>
        <end position="146"/>
    </location>
</feature>
<feature type="region of interest" description="Disordered" evidence="3">
    <location>
        <begin position="176"/>
        <end position="198"/>
    </location>
</feature>
<feature type="region of interest" description="Disordered" evidence="3">
    <location>
        <begin position="231"/>
        <end position="264"/>
    </location>
</feature>
<feature type="compositionally biased region" description="Low complexity" evidence="3">
    <location>
        <begin position="1"/>
        <end position="14"/>
    </location>
</feature>
<feature type="compositionally biased region" description="Basic and acidic residues" evidence="3">
    <location>
        <begin position="113"/>
        <end position="127"/>
    </location>
</feature>
<feature type="compositionally biased region" description="Low complexity" evidence="3">
    <location>
        <begin position="178"/>
        <end position="188"/>
    </location>
</feature>
<feature type="active site" description="Proton acceptor" evidence="2">
    <location>
        <position position="456"/>
    </location>
</feature>
<feature type="binding site" evidence="1">
    <location>
        <begin position="337"/>
        <end position="345"/>
    </location>
    <ligand>
        <name>ATP</name>
        <dbReference type="ChEBI" id="CHEBI:30616"/>
    </ligand>
</feature>
<feature type="binding site" evidence="1">
    <location>
        <position position="359"/>
    </location>
    <ligand>
        <name>ATP</name>
        <dbReference type="ChEBI" id="CHEBI:30616"/>
    </ligand>
</feature>
<feature type="sequence variant" description="In strain: Isolate clinical E460, Isolate clinical E763 and Isolate clinical TH-7A.">
    <original>Q</original>
    <variation>E</variation>
    <location>
        <position position="19"/>
    </location>
</feature>
<feature type="sequence variant" description="In strain: Isolate clinical C005, Isolate clinical C076, Isolate clinical C128, Isolate clinical C325, Isolate clinical C327, Isolate clinical C336, Isolate clinical CL-1A, Isolate clinical E428, Isolate clinical E460, Isolate clinical E540, Isolate clinical E759, Isolate clinical E760, Isolate clinical E761, Isolate clinical E763, Isolate clinical FK-2A, Isolate clinical GR-3A, Isolate clinical HD-4A, Isolate clinical HR-7, Isolate clinical MG-8, Isolate clinical SN-11, Isolate clinical SW-12, Isolate clinical TH-7A and Isolate clinical TL-8A.">
    <original>N</original>
    <variation>D</variation>
    <location>
        <position position="68"/>
    </location>
</feature>
<feature type="sequence variant" description="In strain: Isolate clinical C128.">
    <original>T</original>
    <variation>S</variation>
    <location>
        <position position="95"/>
    </location>
</feature>
<feature type="sequence variant" description="In strain: Isolate clinical E460, Isolate clinical E763, Isolate clinical TH-7A and Isolate clinical TL-8A.">
    <original>S</original>
    <variation>N</variation>
    <location>
        <position position="108"/>
    </location>
</feature>
<feature type="sequence variant" description="In strain: Isolate clinical C128.">
    <original>R</original>
    <variation>C</variation>
    <location>
        <position position="112"/>
    </location>
</feature>
<feature type="sequence variant" description="In strain: Isolate clinical C128, Isolate clinical C076, Isolate clinical CL-1A, Isolate clinical E428, Isolate clinical E760, Isolate clinical FK-2A, Isolate clinical HR-7, Isolate clinical MG-8, Isolate clinical SN-11 and Isolate clinical SW-12.">
    <original>L</original>
    <variation>Q</variation>
    <location>
        <position position="126"/>
    </location>
</feature>
<feature type="sequence variant" description="In strain: Isolate clinical HD-4A.">
    <original>R</original>
    <variation>C</variation>
    <location>
        <position position="137"/>
    </location>
</feature>
<feature type="sequence variant" description="In strain: Isolate clinical TH-7A.">
    <original>E</original>
    <variation>D</variation>
    <location>
        <position position="227"/>
    </location>
</feature>
<feature type="sequence variant" description="In strain: Isolate clinical C005, Isolate clinical C076, Isolate clinical C128, Isolate clinical C325, Isolate clinical C327, Isolate clinical C336, Isolate clinical CL-1A, Isolate clinical E428, Isolate clinical E460, Isolate clinical E540, Isolate clinical E759, Isolate clinical E760, Isolate clinical E761, Isolate clinical E763, Isolate clinical FK-2A, Isolate clinical GR-3A, Isolate clinical HD-4A, Isolate clinical HR-7, Isolate clinical MG-8, Isolate clinical SN-11, Isolate clinical SW-12, Isolate clinical TH-7A and Isolate clinical TL-8A.">
    <original>I</original>
    <variation>V</variation>
    <location>
        <position position="244"/>
    </location>
</feature>
<feature type="sequence variant" description="In strain: Isolate clinical C076.">
    <original>Q</original>
    <variation>K</variation>
    <location>
        <position position="449"/>
    </location>
</feature>
<feature type="sequence variant" description="In GCV resistant isolate." evidence="5">
    <original>M</original>
    <variation>I</variation>
    <location>
        <position position="460"/>
    </location>
</feature>
<feature type="sequence variant" description="In GCV resistant isolate." evidence="5">
    <original>M</original>
    <variation>V</variation>
    <location>
        <position position="460"/>
    </location>
</feature>
<feature type="sequence variant" description="In strain: Isolate clinical C327 and Isolate clinical E761 and Isolate clinical FK-2A.">
    <original>H</original>
    <variation>Y</variation>
    <location>
        <position position="469"/>
    </location>
</feature>
<feature type="sequence variant" description="In strain: Isolate clinical HG-5A.">
    <original>N</original>
    <variation>S</variation>
    <location>
        <position position="510"/>
    </location>
</feature>
<feature type="sequence variant" description="In GCV resistant isolate." evidence="5">
    <original>H</original>
    <variation>Q</variation>
    <location>
        <position position="520"/>
    </location>
</feature>
<feature type="sequence variant" description="In strain: Isolate clinical PB-9.">
    <original>A</original>
    <variation>T</variation>
    <location>
        <position position="582"/>
    </location>
</feature>
<feature type="sequence variant" description="In GCV resistant isolate." evidence="5">
    <original>C</original>
    <variation>G</variation>
    <location>
        <position position="592"/>
    </location>
</feature>
<feature type="sequence variant" description="In GCV resistant isolate." evidence="5">
    <original>A</original>
    <variation>P</variation>
    <location>
        <position position="594"/>
    </location>
</feature>
<feature type="sequence variant" description="In GCV resistant isolate." evidence="5">
    <original>A</original>
    <variation>V</variation>
    <location>
        <position position="594"/>
    </location>
</feature>
<feature type="sequence variant" description="In GCV resistant isolate." evidence="5">
    <original>L</original>
    <variation>S</variation>
    <location>
        <position position="595"/>
    </location>
</feature>
<feature type="sequence variant" description="In GCV resistant isolate." evidence="5">
    <original>L</original>
    <variation>W</variation>
    <location>
        <position position="595"/>
    </location>
</feature>
<feature type="sequence variant" description="In GCV resistant isolate.">
    <original>C</original>
    <variation>W</variation>
    <location>
        <position position="603"/>
    </location>
</feature>
<feature type="sequence variant" description="In strain: Isolate clinical C325.">
    <original>D</original>
    <variation>E</variation>
    <location>
        <position position="605"/>
    </location>
</feature>
<feature type="sequence variant" description="In GCV resistant isolate." evidence="5">
    <original>C</original>
    <variation>Y</variation>
    <location>
        <position position="607"/>
    </location>
</feature>
<comment type="function">
    <text evidence="6 7 8 9 10 11 12 14 15 16 17 18">Serine/threonine protein kinase that plays important roles in several processes including nuclear viral egress, viral replication or regulation of host cell cycle progression (PubMed:25339763, PubMed:31291580, PubMed:31548682). Participates in the acquisition of tegument during virion morphogenesis in the nucleus. Phosphorylates the viral nuclear egress complex (NEC) subunits UL50 and UL53 (PubMed:25339763). Redistributes the host nuclear lamina by phosphorylating cellular Lamins-A/C. Plays a role in viral DNA synthesis by phosphorylating the DNA polymerase processivity factor UL44. Stimulates host cell cycle to support viral DNA synthesis by phosphorylating host retinoblastoma/RB1 protein. Additional substrates have been identified including host EF1D or H2B. Also phosphorylates host SAMHD1 and thereby counteracts its antiviral effect by reducing its dNTP hydrolase activity (PubMed:31291580, PubMed:31548682).</text>
</comment>
<comment type="catalytic activity">
    <reaction evidence="16">
        <text>L-seryl-[protein] + ATP = O-phospho-L-seryl-[protein] + ADP + H(+)</text>
        <dbReference type="Rhea" id="RHEA:17989"/>
        <dbReference type="Rhea" id="RHEA-COMP:9863"/>
        <dbReference type="Rhea" id="RHEA-COMP:11604"/>
        <dbReference type="ChEBI" id="CHEBI:15378"/>
        <dbReference type="ChEBI" id="CHEBI:29999"/>
        <dbReference type="ChEBI" id="CHEBI:30616"/>
        <dbReference type="ChEBI" id="CHEBI:83421"/>
        <dbReference type="ChEBI" id="CHEBI:456216"/>
        <dbReference type="EC" id="2.7.11.1"/>
    </reaction>
</comment>
<comment type="catalytic activity">
    <reaction evidence="17">
        <text>L-threonyl-[protein] + ATP = O-phospho-L-threonyl-[protein] + ADP + H(+)</text>
        <dbReference type="Rhea" id="RHEA:46608"/>
        <dbReference type="Rhea" id="RHEA-COMP:11060"/>
        <dbReference type="Rhea" id="RHEA-COMP:11605"/>
        <dbReference type="ChEBI" id="CHEBI:15378"/>
        <dbReference type="ChEBI" id="CHEBI:30013"/>
        <dbReference type="ChEBI" id="CHEBI:30616"/>
        <dbReference type="ChEBI" id="CHEBI:61977"/>
        <dbReference type="ChEBI" id="CHEBI:456216"/>
        <dbReference type="EC" id="2.7.11.1"/>
    </reaction>
</comment>
<comment type="subunit">
    <text evidence="13">Interacts with UL83.</text>
</comment>
<comment type="subcellular location">
    <subcellularLocation>
        <location>Virion</location>
    </subcellularLocation>
</comment>
<comment type="PTM">
    <text evidence="4 18">Autophosphorylates on serine and threonine residues.</text>
</comment>
<comment type="miscellaneous">
    <text>Monophosphorylates and thereby activates the antiviral nucleoside analog ganciclovir (GCV) used to treat CMV infections. Subsequent di- and triphosphorylation are carried out by cellular enzymes. The viral DNA polymerase incorporates GCV triphosphate into the viral genome, leading to marked attenuation of viral DNA replication and successful suppression of the infection, while the uninfected cell does not have this ability because it lacks the viral kinase. Mutations in phosphotransferase may induce CMV resistance to antiviral therapies in immunocompromised patients.</text>
</comment>
<comment type="similarity">
    <text evidence="19">Belongs to the protein kinase superfamily. Tyr protein kinase family. HCMV ganciclovir subfamily.</text>
</comment>